<sequence length="1006" mass="110405">MKLLSVCAIALLAAQAAGASIKHMLNGFTLMEHSDPAKRELLQKYVTWDEKSLFVNGERIMIFSGEVHPFRLPVPSLWLDVFQKIKALGFNCVSFYVDWALLEGKPGEYRAEGNFALEPFFDVAKQAGIYLLARPGPYINAEASGGGFPGWLQRVNGTLRTSDPAYLKATDNYIAHVAATIAKGQITNGGPVILYQPENEYSGACCDATFPDGDYMQYVIDQARNAGIVVPLINNDAWTGGHNAPGTGKGEVDIYGHDSYPLGFDCGHPSVWPKGNLPTTFRTDHLKQSPTTPYSLIEFQAGSFDPWGGPGFAACAALVNHEFERVFYKNDLSFGAAILNLYMTFGGTNWGNLGHPGGYTSYDYGSPLTESRNVTREKYSELKLIGNFVKASPSYLLATPGNLTTSGYADTADLTVTPLLGNGTGSYFVVRHTDYTSQASTPYKLSLPTSAGRLTVPQLGGTLTLNGRDSKIHVVDYNVAGTNIIYSTAEVFTWKNFGDSKVLILYGGPGEHHELAVSFKSDVQVVEGSNSEFKSKKVGDVAVVAWDVSPSRRIVQIGDLKIFLLDRNSVYNYWVPQLDKDDSSTGYSSEKTTASSIIVKAGYLVRTAYTKGSGLYLTADFNATTPVEVIGAPSNVRNLYINGEKTQFKTDKNGIWSTEVKYSAPKIKLPSMKDLDWKYLDTLQEVQSTYDDSAWPAADLDTTPNTLRPLTTPKSLYSSDYGFHTGYLIYRGHFVADGSETTFDVRTQGGSAFGSSVWLNESFLGSWTGLNANADYNSTYKLPQVEQGKNYVLTILIDTMGLNENWVVGTDEMKNPRGILSYKLSGRDASAITWKLTGNLGGEDYQDKIRGPLNEGGLYAERQGFHQPQPPSQKWKSASPLDGLSKPGIGFYTAQFDLDIPSGWDVPLYFNFGNSTKSAYRVQLYVNGYQYGKFVSNIGPQTSFPVPQGILNYQGTNWVALTLWALESDGAKLDDFELVNTTPVMTALSKIRPSKQPNYRQRKGAY</sequence>
<name>BGALA_ASPFC</name>
<accession>B0XMP7</accession>
<dbReference type="EC" id="3.2.1.23"/>
<dbReference type="EMBL" id="DS499594">
    <property type="protein sequence ID" value="EDP56654.1"/>
    <property type="status" value="ALT_SEQ"/>
    <property type="molecule type" value="Genomic_DNA"/>
</dbReference>
<dbReference type="SMR" id="B0XMP7"/>
<dbReference type="GlyCosmos" id="B0XMP7">
    <property type="glycosylation" value="8 sites, No reported glycans"/>
</dbReference>
<dbReference type="OrthoDB" id="20795at5052"/>
<dbReference type="PhylomeDB" id="B0XMP7"/>
<dbReference type="Proteomes" id="UP000001699">
    <property type="component" value="Unassembled WGS sequence"/>
</dbReference>
<dbReference type="GO" id="GO:0005576">
    <property type="term" value="C:extracellular region"/>
    <property type="evidence" value="ECO:0007669"/>
    <property type="project" value="UniProtKB-SubCell"/>
</dbReference>
<dbReference type="GO" id="GO:0004565">
    <property type="term" value="F:beta-galactosidase activity"/>
    <property type="evidence" value="ECO:0007669"/>
    <property type="project" value="UniProtKB-EC"/>
</dbReference>
<dbReference type="GO" id="GO:0000272">
    <property type="term" value="P:polysaccharide catabolic process"/>
    <property type="evidence" value="ECO:0007669"/>
    <property type="project" value="UniProtKB-KW"/>
</dbReference>
<dbReference type="FunFam" id="2.102.20.10:FF:000001">
    <property type="entry name" value="Beta-galactosidase A"/>
    <property type="match status" value="1"/>
</dbReference>
<dbReference type="FunFam" id="2.60.120.260:FF:000065">
    <property type="entry name" value="Beta-galactosidase A"/>
    <property type="match status" value="1"/>
</dbReference>
<dbReference type="FunFam" id="2.60.120.260:FF:000088">
    <property type="entry name" value="Beta-galactosidase A"/>
    <property type="match status" value="1"/>
</dbReference>
<dbReference type="FunFam" id="2.60.390.10:FF:000001">
    <property type="entry name" value="Beta-galactosidase A"/>
    <property type="match status" value="1"/>
</dbReference>
<dbReference type="FunFam" id="3.20.20.80:FF:000040">
    <property type="entry name" value="Beta-galactosidase A"/>
    <property type="match status" value="1"/>
</dbReference>
<dbReference type="Gene3D" id="2.102.20.10">
    <property type="entry name" value="Beta-galactosidase, domain 2"/>
    <property type="match status" value="1"/>
</dbReference>
<dbReference type="Gene3D" id="2.60.390.10">
    <property type="entry name" value="Beta-galactosidase, domain 3"/>
    <property type="match status" value="1"/>
</dbReference>
<dbReference type="Gene3D" id="2.60.120.260">
    <property type="entry name" value="Galactose-binding domain-like"/>
    <property type="match status" value="2"/>
</dbReference>
<dbReference type="Gene3D" id="3.20.20.80">
    <property type="entry name" value="Glycosidases"/>
    <property type="match status" value="1"/>
</dbReference>
<dbReference type="InterPro" id="IPR018954">
    <property type="entry name" value="Betagal_dom2"/>
</dbReference>
<dbReference type="InterPro" id="IPR037110">
    <property type="entry name" value="Betagal_dom2_sf"/>
</dbReference>
<dbReference type="InterPro" id="IPR025972">
    <property type="entry name" value="BetaGal_dom3"/>
</dbReference>
<dbReference type="InterPro" id="IPR036833">
    <property type="entry name" value="BetaGal_dom3_sf"/>
</dbReference>
<dbReference type="InterPro" id="IPR025300">
    <property type="entry name" value="BetaGal_jelly_roll_dom"/>
</dbReference>
<dbReference type="InterPro" id="IPR008979">
    <property type="entry name" value="Galactose-bd-like_sf"/>
</dbReference>
<dbReference type="InterPro" id="IPR031330">
    <property type="entry name" value="Gly_Hdrlase_35_cat"/>
</dbReference>
<dbReference type="InterPro" id="IPR019801">
    <property type="entry name" value="Glyco_hydro_35_CS"/>
</dbReference>
<dbReference type="InterPro" id="IPR001944">
    <property type="entry name" value="Glycoside_Hdrlase_35"/>
</dbReference>
<dbReference type="InterPro" id="IPR017853">
    <property type="entry name" value="Glycoside_hydrolase_SF"/>
</dbReference>
<dbReference type="PANTHER" id="PTHR23421">
    <property type="entry name" value="BETA-GALACTOSIDASE RELATED"/>
    <property type="match status" value="1"/>
</dbReference>
<dbReference type="Pfam" id="PF13364">
    <property type="entry name" value="BetaGal_ABD2"/>
    <property type="match status" value="2"/>
</dbReference>
<dbReference type="Pfam" id="PF10435">
    <property type="entry name" value="BetaGal_dom2"/>
    <property type="match status" value="1"/>
</dbReference>
<dbReference type="Pfam" id="PF13363">
    <property type="entry name" value="BetaGal_dom3"/>
    <property type="match status" value="1"/>
</dbReference>
<dbReference type="Pfam" id="PF01301">
    <property type="entry name" value="Glyco_hydro_35"/>
    <property type="match status" value="1"/>
</dbReference>
<dbReference type="PRINTS" id="PR00742">
    <property type="entry name" value="GLHYDRLASE35"/>
</dbReference>
<dbReference type="SMART" id="SM01029">
    <property type="entry name" value="BetaGal_dom2"/>
    <property type="match status" value="1"/>
</dbReference>
<dbReference type="SUPFAM" id="SSF51445">
    <property type="entry name" value="(Trans)glycosidases"/>
    <property type="match status" value="1"/>
</dbReference>
<dbReference type="SUPFAM" id="SSF117100">
    <property type="entry name" value="Beta-galactosidase LacA, domain 3"/>
    <property type="match status" value="1"/>
</dbReference>
<dbReference type="SUPFAM" id="SSF49785">
    <property type="entry name" value="Galactose-binding domain-like"/>
    <property type="match status" value="2"/>
</dbReference>
<dbReference type="SUPFAM" id="SSF51011">
    <property type="entry name" value="Glycosyl hydrolase domain"/>
    <property type="match status" value="1"/>
</dbReference>
<dbReference type="PROSITE" id="PS01182">
    <property type="entry name" value="GLYCOSYL_HYDROL_F35"/>
    <property type="match status" value="1"/>
</dbReference>
<reference key="1">
    <citation type="journal article" date="2008" name="PLoS Genet.">
        <title>Genomic islands in the pathogenic filamentous fungus Aspergillus fumigatus.</title>
        <authorList>
            <person name="Fedorova N.D."/>
            <person name="Khaldi N."/>
            <person name="Joardar V.S."/>
            <person name="Maiti R."/>
            <person name="Amedeo P."/>
            <person name="Anderson M.J."/>
            <person name="Crabtree J."/>
            <person name="Silva J.C."/>
            <person name="Badger J.H."/>
            <person name="Albarraq A."/>
            <person name="Angiuoli S."/>
            <person name="Bussey H."/>
            <person name="Bowyer P."/>
            <person name="Cotty P.J."/>
            <person name="Dyer P.S."/>
            <person name="Egan A."/>
            <person name="Galens K."/>
            <person name="Fraser-Liggett C.M."/>
            <person name="Haas B.J."/>
            <person name="Inman J.M."/>
            <person name="Kent R."/>
            <person name="Lemieux S."/>
            <person name="Malavazi I."/>
            <person name="Orvis J."/>
            <person name="Roemer T."/>
            <person name="Ronning C.M."/>
            <person name="Sundaram J.P."/>
            <person name="Sutton G."/>
            <person name="Turner G."/>
            <person name="Venter J.C."/>
            <person name="White O.R."/>
            <person name="Whitty B.R."/>
            <person name="Youngman P."/>
            <person name="Wolfe K.H."/>
            <person name="Goldman G.H."/>
            <person name="Wortman J.R."/>
            <person name="Jiang B."/>
            <person name="Denning D.W."/>
            <person name="Nierman W.C."/>
        </authorList>
    </citation>
    <scope>NUCLEOTIDE SEQUENCE [LARGE SCALE GENOMIC DNA]</scope>
    <source>
        <strain>CBS 144.89 / FGSC A1163 / CEA10</strain>
    </source>
</reference>
<organism>
    <name type="scientific">Aspergillus fumigatus (strain CBS 144.89 / FGSC A1163 / CEA10)</name>
    <name type="common">Neosartorya fumigata</name>
    <dbReference type="NCBI Taxonomy" id="451804"/>
    <lineage>
        <taxon>Eukaryota</taxon>
        <taxon>Fungi</taxon>
        <taxon>Dikarya</taxon>
        <taxon>Ascomycota</taxon>
        <taxon>Pezizomycotina</taxon>
        <taxon>Eurotiomycetes</taxon>
        <taxon>Eurotiomycetidae</taxon>
        <taxon>Eurotiales</taxon>
        <taxon>Aspergillaceae</taxon>
        <taxon>Aspergillus</taxon>
        <taxon>Aspergillus subgen. Fumigati</taxon>
    </lineage>
</organism>
<keyword id="KW-0119">Carbohydrate metabolism</keyword>
<keyword id="KW-1015">Disulfide bond</keyword>
<keyword id="KW-0325">Glycoprotein</keyword>
<keyword id="KW-0326">Glycosidase</keyword>
<keyword id="KW-0378">Hydrolase</keyword>
<keyword id="KW-0624">Polysaccharide degradation</keyword>
<keyword id="KW-0964">Secreted</keyword>
<keyword id="KW-0732">Signal</keyword>
<comment type="function">
    <text evidence="1">Cleaves beta-linked terminal galactosyl residues from gangliosides, glycoproteins, and glycosaminoglycans.</text>
</comment>
<comment type="catalytic activity">
    <reaction>
        <text>Hydrolysis of terminal non-reducing beta-D-galactose residues in beta-D-galactosides.</text>
        <dbReference type="EC" id="3.2.1.23"/>
    </reaction>
</comment>
<comment type="subcellular location">
    <subcellularLocation>
        <location evidence="1">Secreted</location>
    </subcellularLocation>
</comment>
<comment type="similarity">
    <text evidence="3">Belongs to the glycosyl hydrolase 35 family.</text>
</comment>
<comment type="sequence caution" evidence="3">
    <conflict type="erroneous gene model prediction">
        <sequence resource="EMBL-CDS" id="EDP56654"/>
    </conflict>
</comment>
<proteinExistence type="inferred from homology"/>
<evidence type="ECO:0000250" key="1"/>
<evidence type="ECO:0000255" key="2"/>
<evidence type="ECO:0000305" key="3"/>
<feature type="signal peptide" evidence="2">
    <location>
        <begin position="1"/>
        <end position="18"/>
    </location>
</feature>
<feature type="chain" id="PRO_0000395215" description="Probable beta-galactosidase A">
    <location>
        <begin position="19"/>
        <end position="1006"/>
    </location>
</feature>
<feature type="active site" description="Proton donor" evidence="2">
    <location>
        <position position="200"/>
    </location>
</feature>
<feature type="active site" description="Nucleophile" evidence="2">
    <location>
        <position position="298"/>
    </location>
</feature>
<feature type="binding site" evidence="1">
    <location>
        <position position="96"/>
    </location>
    <ligand>
        <name>substrate</name>
    </ligand>
</feature>
<feature type="binding site" evidence="1">
    <location>
        <position position="140"/>
    </location>
    <ligand>
        <name>substrate</name>
    </ligand>
</feature>
<feature type="binding site" evidence="1">
    <location>
        <position position="141"/>
    </location>
    <ligand>
        <name>substrate</name>
    </ligand>
</feature>
<feature type="binding site" evidence="1">
    <location>
        <position position="142"/>
    </location>
    <ligand>
        <name>substrate</name>
    </ligand>
</feature>
<feature type="binding site" evidence="1">
    <location>
        <position position="199"/>
    </location>
    <ligand>
        <name>substrate</name>
    </ligand>
</feature>
<feature type="binding site" evidence="1">
    <location>
        <position position="260"/>
    </location>
    <ligand>
        <name>substrate</name>
    </ligand>
</feature>
<feature type="binding site" evidence="1">
    <location>
        <position position="364"/>
    </location>
    <ligand>
        <name>substrate</name>
    </ligand>
</feature>
<feature type="glycosylation site" description="N-linked (GlcNAc...) asparagine" evidence="2">
    <location>
        <position position="156"/>
    </location>
</feature>
<feature type="glycosylation site" description="N-linked (GlcNAc...) asparagine" evidence="2">
    <location>
        <position position="373"/>
    </location>
</feature>
<feature type="glycosylation site" description="N-linked (GlcNAc...) asparagine" evidence="2">
    <location>
        <position position="402"/>
    </location>
</feature>
<feature type="glycosylation site" description="N-linked (GlcNAc...) asparagine" evidence="2">
    <location>
        <position position="422"/>
    </location>
</feature>
<feature type="glycosylation site" description="N-linked (GlcNAc...) asparagine" evidence="2">
    <location>
        <position position="622"/>
    </location>
</feature>
<feature type="glycosylation site" description="N-linked (GlcNAc...) asparagine" evidence="2">
    <location>
        <position position="760"/>
    </location>
</feature>
<feature type="glycosylation site" description="N-linked (GlcNAc...) asparagine" evidence="2">
    <location>
        <position position="777"/>
    </location>
</feature>
<feature type="glycosylation site" description="N-linked (GlcNAc...) asparagine" evidence="2">
    <location>
        <position position="914"/>
    </location>
</feature>
<feature type="disulfide bond" evidence="1">
    <location>
        <begin position="205"/>
        <end position="206"/>
    </location>
</feature>
<feature type="disulfide bond" evidence="1">
    <location>
        <begin position="266"/>
        <end position="315"/>
    </location>
</feature>
<gene>
    <name type="primary">lacA</name>
    <name type="ORF">AFUB_013710</name>
</gene>
<protein>
    <recommendedName>
        <fullName>Probable beta-galactosidase A</fullName>
        <ecNumber>3.2.1.23</ecNumber>
    </recommendedName>
    <alternativeName>
        <fullName>Lactase A</fullName>
    </alternativeName>
</protein>